<accession>Q8CGI1</accession>
<accession>Q499G1</accession>
<organism>
    <name type="scientific">Mus musculus</name>
    <name type="common">Mouse</name>
    <dbReference type="NCBI Taxonomy" id="10090"/>
    <lineage>
        <taxon>Eukaryota</taxon>
        <taxon>Metazoa</taxon>
        <taxon>Chordata</taxon>
        <taxon>Craniata</taxon>
        <taxon>Vertebrata</taxon>
        <taxon>Euteleostomi</taxon>
        <taxon>Mammalia</taxon>
        <taxon>Eutheria</taxon>
        <taxon>Euarchontoglires</taxon>
        <taxon>Glires</taxon>
        <taxon>Rodentia</taxon>
        <taxon>Myomorpha</taxon>
        <taxon>Muroidea</taxon>
        <taxon>Muridae</taxon>
        <taxon>Murinae</taxon>
        <taxon>Mus</taxon>
        <taxon>Mus</taxon>
    </lineage>
</organism>
<evidence type="ECO:0000250" key="1">
    <source>
        <dbReference type="UniProtKB" id="P78312"/>
    </source>
</evidence>
<evidence type="ECO:0000255" key="2"/>
<evidence type="ECO:0000256" key="3">
    <source>
        <dbReference type="SAM" id="MobiDB-lite"/>
    </source>
</evidence>
<evidence type="ECO:0000305" key="4"/>
<evidence type="ECO:0007744" key="5">
    <source>
    </source>
</evidence>
<keyword id="KW-0175">Coiled coil</keyword>
<keyword id="KW-0597">Phosphoprotein</keyword>
<keyword id="KW-1185">Reference proteome</keyword>
<sequence>MKVRLLRQLSAAAKAKAPSGLQGPPQAHHFVSLLLEEYAALCQAARSISTFLGTLENEHLKKFQVTWELHNKHLFENLVFSEPLLQSNLPALVSQIRLGTTTHDTCTEDMYSTLLQRYQRSEEELRKVAEEWLECQKRIDAYVDEQMTMKTKQRMLTEDWEIFKQRRLIEEQLTNKKVVTGENNFTDTRRHMLSSRLSMPDCPNCNYRRRCACDDCSLSHILTCGIMDTPVTDDIHIHQLPLQVDSAPDYLSEMRPPSVSSASSGSGSSSPITIQQHPRLILTDNGSAPTFCSDDEDVAPLSAKFADIYPLTNYDDTNVVANMNGIHSELNGGGENMALKDESPQVSSTSRSSSEADDEDADGESSGEPPGAPKQEEAIGNGNPKTEESNVNTPPPSYPAQQAEQTPNTCECHVCKQEASGLPASAMTAGALPPGHQFLSPEKPTHPALHLYPHIHGHVPLHTVPHLPRPLIHPTLYPAPPFTHSKALPPAPVQSHTNKPQAFNASLQDHIYPSCFGNTPDWNSSKFISLWESEMMNDKNWNPGTFLPDTISGNDILGPVLSETRPEALPPPPSNEAPAVSDIKEKKNAAKKKCLYNFQDAFMEANEVAMANTVAMATSSATSSVSCTATTVQSSSSQFKVSSRRPPSIGDVFHGLNKEDHRHSAPAAPRNSPTGLAPLPALSPSALSPASTPHLPNLAAPSFPKTATTAPGFVDTRKSFCPTPVAPPPSTTDGSISAPPSVCSDPDCEGHRCENGVYDPQQDDGDESADEDSCSEHSSSTSTSTNQKEGKYCDCCYCEFFGHGGPPAAPTSRNYAEMREKLRLRLTKRKEEQPKKMEQISEREGVVDHRRVEDLLQFINSSEAKPVSSSRAAKRARHKQRKLEEKARLEAEARAREHLHHQEEQKQREEEEDEEEEDEEQHFKEEFQRLQELQKLRAAKKKKKDRPSKDCSKLDMLARNFQAATESISNSENIHNGSLEQTEEPETSSHSPSRHMNHSEPRPGPGANGDATDPVDPRDPSKLLLPKEVNGKQHEPLAFLLDMMHHHKEGNSKQKLKQTSKTSNEPARKPTEPPKTTEVQLKPRAQPELKPKVVDLALLTEQKREERKTNSNNNNKKQLSHIKEEKLSTVTPEPPSPSQLLQNGRLILASSPQPKGKNKKNKKKKGDRTSSSLDDVFLPKDIDLDSVDMDETEREVEYFKRFCLDSARQNRQRLSINWSNFSLKKATFAAH</sequence>
<proteinExistence type="evidence at protein level"/>
<reference key="1">
    <citation type="journal article" date="2004" name="Genome Res.">
        <title>The status, quality, and expansion of the NIH full-length cDNA project: the Mammalian Gene Collection (MGC).</title>
        <authorList>
            <consortium name="The MGC Project Team"/>
        </authorList>
    </citation>
    <scope>NUCLEOTIDE SEQUENCE [LARGE SCALE MRNA]</scope>
    <source>
        <strain>C57BL/6J</strain>
        <strain>FVB/N-3</strain>
        <tissue>Eye</tissue>
        <tissue>Mammary tumor</tissue>
    </source>
</reference>
<reference key="2">
    <citation type="journal article" date="2010" name="Cell">
        <title>A tissue-specific atlas of mouse protein phosphorylation and expression.</title>
        <authorList>
            <person name="Huttlin E.L."/>
            <person name="Jedrychowski M.P."/>
            <person name="Elias J.E."/>
            <person name="Goswami T."/>
            <person name="Rad R."/>
            <person name="Beausoleil S.A."/>
            <person name="Villen J."/>
            <person name="Haas W."/>
            <person name="Sowa M.E."/>
            <person name="Gygi S.P."/>
        </authorList>
    </citation>
    <scope>PHOSPHORYLATION [LARGE SCALE ANALYSIS] AT SER-293</scope>
    <scope>IDENTIFICATION BY MASS SPECTROMETRY [LARGE SCALE ANALYSIS]</scope>
    <source>
        <tissue>Brain</tissue>
        <tissue>Brown adipose tissue</tissue>
        <tissue>Kidney</tissue>
        <tissue>Lung</tissue>
        <tissue>Pancreas</tissue>
        <tissue>Testis</tissue>
    </source>
</reference>
<dbReference type="EMBL" id="BC037112">
    <property type="protein sequence ID" value="AAH37112.1"/>
    <property type="molecule type" value="mRNA"/>
</dbReference>
<dbReference type="EMBL" id="BC099925">
    <property type="protein sequence ID" value="AAH99925.1"/>
    <property type="molecule type" value="mRNA"/>
</dbReference>
<dbReference type="RefSeq" id="NP_001230052.1">
    <property type="nucleotide sequence ID" value="NM_001243123.1"/>
</dbReference>
<dbReference type="SMR" id="Q8CGI1"/>
<dbReference type="BioGRID" id="231087">
    <property type="interactions" value="4"/>
</dbReference>
<dbReference type="FunCoup" id="Q8CGI1">
    <property type="interactions" value="3753"/>
</dbReference>
<dbReference type="IntAct" id="Q8CGI1">
    <property type="interactions" value="1"/>
</dbReference>
<dbReference type="MINT" id="Q8CGI1"/>
<dbReference type="STRING" id="10090.ENSMUSP00000138082"/>
<dbReference type="GlyGen" id="Q8CGI1">
    <property type="glycosylation" value="3 sites, 1 O-linked glycan (3 sites)"/>
</dbReference>
<dbReference type="iPTMnet" id="Q8CGI1"/>
<dbReference type="PhosphoSitePlus" id="Q8CGI1"/>
<dbReference type="jPOST" id="Q8CGI1"/>
<dbReference type="PaxDb" id="10090-ENSMUSP00000138082"/>
<dbReference type="PeptideAtlas" id="Q8CGI1"/>
<dbReference type="ProteomicsDB" id="277016"/>
<dbReference type="Pumba" id="Q8CGI1"/>
<dbReference type="Antibodypedia" id="50867">
    <property type="antibodies" value="18 antibodies from 9 providers"/>
</dbReference>
<dbReference type="Ensembl" id="ENSMUST00000094867.8">
    <property type="protein sequence ID" value="ENSMUSP00000092463.5"/>
    <property type="gene ID" value="ENSMUSG00000037210.17"/>
</dbReference>
<dbReference type="GeneID" id="231128"/>
<dbReference type="KEGG" id="mmu:231128"/>
<dbReference type="AGR" id="MGI:2447768"/>
<dbReference type="CTD" id="8603"/>
<dbReference type="MGI" id="MGI:2447768">
    <property type="gene designation" value="Fam193a"/>
</dbReference>
<dbReference type="VEuPathDB" id="HostDB:ENSMUSG00000037210"/>
<dbReference type="eggNOG" id="ENOG502QVAZ">
    <property type="taxonomic scope" value="Eukaryota"/>
</dbReference>
<dbReference type="GeneTree" id="ENSGT00390000000973"/>
<dbReference type="InParanoid" id="Q8CGI1"/>
<dbReference type="OrthoDB" id="80588at9989"/>
<dbReference type="PhylomeDB" id="Q8CGI1"/>
<dbReference type="TreeFam" id="TF330223"/>
<dbReference type="BioGRID-ORCS" id="231128">
    <property type="hits" value="2 hits in 38 CRISPR screens"/>
</dbReference>
<dbReference type="ChiTaRS" id="Fam193a">
    <property type="organism name" value="mouse"/>
</dbReference>
<dbReference type="PRO" id="PR:Q8CGI1"/>
<dbReference type="Proteomes" id="UP000000589">
    <property type="component" value="Chromosome 5"/>
</dbReference>
<dbReference type="RNAct" id="Q8CGI1">
    <property type="molecule type" value="protein"/>
</dbReference>
<dbReference type="Bgee" id="ENSMUSG00000037210">
    <property type="expression patterns" value="Expressed in animal zygote and 221 other cell types or tissues"/>
</dbReference>
<dbReference type="ExpressionAtlas" id="Q8CGI1">
    <property type="expression patterns" value="baseline and differential"/>
</dbReference>
<dbReference type="InterPro" id="IPR029717">
    <property type="entry name" value="FAM193"/>
</dbReference>
<dbReference type="InterPro" id="IPR031802">
    <property type="entry name" value="FAM193_C"/>
</dbReference>
<dbReference type="PANTHER" id="PTHR15109">
    <property type="entry name" value="AGAP004327-PA"/>
    <property type="match status" value="1"/>
</dbReference>
<dbReference type="PANTHER" id="PTHR15109:SF2">
    <property type="entry name" value="PROTEIN FAM193A"/>
    <property type="match status" value="1"/>
</dbReference>
<dbReference type="Pfam" id="PF15914">
    <property type="entry name" value="FAM193_C"/>
    <property type="match status" value="1"/>
</dbReference>
<protein>
    <recommendedName>
        <fullName>Protein FAM193A</fullName>
    </recommendedName>
</protein>
<feature type="chain" id="PRO_0000089431" description="Protein FAM193A">
    <location>
        <begin position="1"/>
        <end position="1231"/>
    </location>
</feature>
<feature type="region of interest" description="Disordered" evidence="3">
    <location>
        <begin position="249"/>
        <end position="272"/>
    </location>
</feature>
<feature type="region of interest" description="Disordered" evidence="3">
    <location>
        <begin position="331"/>
        <end position="405"/>
    </location>
</feature>
<feature type="region of interest" description="Disordered" evidence="3">
    <location>
        <begin position="633"/>
        <end position="703"/>
    </location>
</feature>
<feature type="region of interest" description="Disordered" evidence="3">
    <location>
        <begin position="719"/>
        <end position="789"/>
    </location>
</feature>
<feature type="region of interest" description="Disordered" evidence="3">
    <location>
        <begin position="826"/>
        <end position="845"/>
    </location>
</feature>
<feature type="region of interest" description="Disordered" evidence="3">
    <location>
        <begin position="860"/>
        <end position="1174"/>
    </location>
</feature>
<feature type="coiled-coil region" evidence="2">
    <location>
        <begin position="106"/>
        <end position="142"/>
    </location>
</feature>
<feature type="coiled-coil region" evidence="2">
    <location>
        <begin position="877"/>
        <end position="973"/>
    </location>
</feature>
<feature type="compositionally biased region" description="Low complexity" evidence="3">
    <location>
        <begin position="258"/>
        <end position="270"/>
    </location>
</feature>
<feature type="compositionally biased region" description="Acidic residues" evidence="3">
    <location>
        <begin position="355"/>
        <end position="365"/>
    </location>
</feature>
<feature type="compositionally biased region" description="Low complexity" evidence="3">
    <location>
        <begin position="676"/>
        <end position="691"/>
    </location>
</feature>
<feature type="compositionally biased region" description="Acidic residues" evidence="3">
    <location>
        <begin position="761"/>
        <end position="773"/>
    </location>
</feature>
<feature type="compositionally biased region" description="Low complexity" evidence="3">
    <location>
        <begin position="776"/>
        <end position="785"/>
    </location>
</feature>
<feature type="compositionally biased region" description="Basic residues" evidence="3">
    <location>
        <begin position="872"/>
        <end position="881"/>
    </location>
</feature>
<feature type="compositionally biased region" description="Basic and acidic residues" evidence="3">
    <location>
        <begin position="882"/>
        <end position="909"/>
    </location>
</feature>
<feature type="compositionally biased region" description="Acidic residues" evidence="3">
    <location>
        <begin position="910"/>
        <end position="920"/>
    </location>
</feature>
<feature type="compositionally biased region" description="Basic and acidic residues" evidence="3">
    <location>
        <begin position="921"/>
        <end position="935"/>
    </location>
</feature>
<feature type="compositionally biased region" description="Basic residues" evidence="3">
    <location>
        <begin position="937"/>
        <end position="946"/>
    </location>
</feature>
<feature type="compositionally biased region" description="Polar residues" evidence="3">
    <location>
        <begin position="962"/>
        <end position="979"/>
    </location>
</feature>
<feature type="compositionally biased region" description="Basic residues" evidence="3">
    <location>
        <begin position="1156"/>
        <end position="1166"/>
    </location>
</feature>
<feature type="modified residue" description="Phosphoserine" evidence="5">
    <location>
        <position position="293"/>
    </location>
</feature>
<feature type="modified residue" description="Phosphoserine" evidence="1">
    <location>
        <position position="648"/>
    </location>
</feature>
<feature type="modified residue" description="Phosphoserine" evidence="1">
    <location>
        <position position="1136"/>
    </location>
</feature>
<feature type="modified residue" description="Phosphoserine" evidence="1">
    <location>
        <position position="1151"/>
    </location>
</feature>
<comment type="similarity">
    <text evidence="4">Belongs to the FAM193 family.</text>
</comment>
<name>F193A_MOUSE</name>
<gene>
    <name type="primary">Fam193a</name>
</gene>